<gene>
    <name type="ordered locus">At1g64195</name>
    <name type="ORF">F22C12.4</name>
</gene>
<name>DEF35_ARATH</name>
<proteinExistence type="evidence at transcript level"/>
<feature type="signal peptide" evidence="2">
    <location>
        <begin position="1"/>
        <end position="22"/>
    </location>
</feature>
<feature type="chain" id="PRO_0000379617" description="Defensin-like protein 35">
    <location>
        <begin position="23"/>
        <end position="72"/>
    </location>
</feature>
<feature type="disulfide bond" evidence="1">
    <location>
        <begin position="32"/>
        <end position="58"/>
    </location>
</feature>
<feature type="disulfide bond" evidence="1">
    <location>
        <begin position="44"/>
        <end position="67"/>
    </location>
</feature>
<feature type="disulfide bond" evidence="1">
    <location>
        <begin position="48"/>
        <end position="69"/>
    </location>
</feature>
<protein>
    <recommendedName>
        <fullName>Defensin-like protein 35</fullName>
    </recommendedName>
</protein>
<dbReference type="EMBL" id="AC007764">
    <property type="protein sequence ID" value="AAF24559.1"/>
    <property type="status" value="ALT_SEQ"/>
    <property type="molecule type" value="Genomic_DNA"/>
</dbReference>
<dbReference type="EMBL" id="CP002684">
    <property type="protein sequence ID" value="AEE34208.1"/>
    <property type="molecule type" value="Genomic_DNA"/>
</dbReference>
<dbReference type="PIR" id="C96666">
    <property type="entry name" value="C96666"/>
</dbReference>
<dbReference type="RefSeq" id="NP_001031227.2">
    <property type="nucleotide sequence ID" value="NM_001036150.3"/>
</dbReference>
<dbReference type="SMR" id="Q2V4F3"/>
<dbReference type="STRING" id="3702.Q2V4F3"/>
<dbReference type="PaxDb" id="3702-AT1G64195.1"/>
<dbReference type="EnsemblPlants" id="AT1G64195.1">
    <property type="protein sequence ID" value="AT1G64195.1"/>
    <property type="gene ID" value="AT1G64195"/>
</dbReference>
<dbReference type="GeneID" id="3767629"/>
<dbReference type="Gramene" id="AT1G64195.1">
    <property type="protein sequence ID" value="AT1G64195.1"/>
    <property type="gene ID" value="AT1G64195"/>
</dbReference>
<dbReference type="KEGG" id="ath:AT1G64195"/>
<dbReference type="Araport" id="AT1G64195"/>
<dbReference type="TAIR" id="AT1G64195"/>
<dbReference type="HOGENOM" id="CLU_2725643_0_0_1"/>
<dbReference type="InParanoid" id="Q2V4F3"/>
<dbReference type="OMA" id="KSECSIY"/>
<dbReference type="PhylomeDB" id="Q2V4F3"/>
<dbReference type="PRO" id="PR:Q2V4F3"/>
<dbReference type="Proteomes" id="UP000006548">
    <property type="component" value="Chromosome 1"/>
</dbReference>
<dbReference type="ExpressionAtlas" id="Q2V4F3">
    <property type="expression patterns" value="baseline and differential"/>
</dbReference>
<dbReference type="GO" id="GO:0005576">
    <property type="term" value="C:extracellular region"/>
    <property type="evidence" value="ECO:0007669"/>
    <property type="project" value="UniProtKB-SubCell"/>
</dbReference>
<dbReference type="GO" id="GO:0050832">
    <property type="term" value="P:defense response to fungus"/>
    <property type="evidence" value="ECO:0007669"/>
    <property type="project" value="UniProtKB-KW"/>
</dbReference>
<dbReference type="GO" id="GO:0031640">
    <property type="term" value="P:killing of cells of another organism"/>
    <property type="evidence" value="ECO:0007669"/>
    <property type="project" value="UniProtKB-KW"/>
</dbReference>
<comment type="subcellular location">
    <subcellularLocation>
        <location evidence="1">Secreted</location>
    </subcellularLocation>
</comment>
<comment type="similarity">
    <text evidence="3">Belongs to the DEFL family.</text>
</comment>
<comment type="caution">
    <text evidence="3">Lacks 1 of the 4 disulfide bonds, which are conserved features of the family.</text>
</comment>
<comment type="sequence caution" evidence="3">
    <conflict type="erroneous gene model prediction">
        <sequence resource="EMBL-CDS" id="AAF24559"/>
    </conflict>
    <text>The predicted gene has been split into 2 genes: At1g64195 and At1g64200.</text>
</comment>
<accession>Q2V4F3</accession>
<accession>Q9SH70</accession>
<evidence type="ECO:0000250" key="1"/>
<evidence type="ECO:0000255" key="2"/>
<evidence type="ECO:0000305" key="3"/>
<organism>
    <name type="scientific">Arabidopsis thaliana</name>
    <name type="common">Mouse-ear cress</name>
    <dbReference type="NCBI Taxonomy" id="3702"/>
    <lineage>
        <taxon>Eukaryota</taxon>
        <taxon>Viridiplantae</taxon>
        <taxon>Streptophyta</taxon>
        <taxon>Embryophyta</taxon>
        <taxon>Tracheophyta</taxon>
        <taxon>Spermatophyta</taxon>
        <taxon>Magnoliopsida</taxon>
        <taxon>eudicotyledons</taxon>
        <taxon>Gunneridae</taxon>
        <taxon>Pentapetalae</taxon>
        <taxon>rosids</taxon>
        <taxon>malvids</taxon>
        <taxon>Brassicales</taxon>
        <taxon>Brassicaceae</taxon>
        <taxon>Camelineae</taxon>
        <taxon>Arabidopsis</taxon>
    </lineage>
</organism>
<sequence length="72" mass="7913">MASNKISFSFVLCLYMCSLLDAKSMNPTGRRCPDPNGVEKKSMCYSSCKTQGFMGGSCQGHKGNYMCECYEG</sequence>
<reference key="1">
    <citation type="journal article" date="2000" name="Nature">
        <title>Sequence and analysis of chromosome 1 of the plant Arabidopsis thaliana.</title>
        <authorList>
            <person name="Theologis A."/>
            <person name="Ecker J.R."/>
            <person name="Palm C.J."/>
            <person name="Federspiel N.A."/>
            <person name="Kaul S."/>
            <person name="White O."/>
            <person name="Alonso J."/>
            <person name="Altafi H."/>
            <person name="Araujo R."/>
            <person name="Bowman C.L."/>
            <person name="Brooks S.Y."/>
            <person name="Buehler E."/>
            <person name="Chan A."/>
            <person name="Chao Q."/>
            <person name="Chen H."/>
            <person name="Cheuk R.F."/>
            <person name="Chin C.W."/>
            <person name="Chung M.K."/>
            <person name="Conn L."/>
            <person name="Conway A.B."/>
            <person name="Conway A.R."/>
            <person name="Creasy T.H."/>
            <person name="Dewar K."/>
            <person name="Dunn P."/>
            <person name="Etgu P."/>
            <person name="Feldblyum T.V."/>
            <person name="Feng J.-D."/>
            <person name="Fong B."/>
            <person name="Fujii C.Y."/>
            <person name="Gill J.E."/>
            <person name="Goldsmith A.D."/>
            <person name="Haas B."/>
            <person name="Hansen N.F."/>
            <person name="Hughes B."/>
            <person name="Huizar L."/>
            <person name="Hunter J.L."/>
            <person name="Jenkins J."/>
            <person name="Johnson-Hopson C."/>
            <person name="Khan S."/>
            <person name="Khaykin E."/>
            <person name="Kim C.J."/>
            <person name="Koo H.L."/>
            <person name="Kremenetskaia I."/>
            <person name="Kurtz D.B."/>
            <person name="Kwan A."/>
            <person name="Lam B."/>
            <person name="Langin-Hooper S."/>
            <person name="Lee A."/>
            <person name="Lee J.M."/>
            <person name="Lenz C.A."/>
            <person name="Li J.H."/>
            <person name="Li Y.-P."/>
            <person name="Lin X."/>
            <person name="Liu S.X."/>
            <person name="Liu Z.A."/>
            <person name="Luros J.S."/>
            <person name="Maiti R."/>
            <person name="Marziali A."/>
            <person name="Militscher J."/>
            <person name="Miranda M."/>
            <person name="Nguyen M."/>
            <person name="Nierman W.C."/>
            <person name="Osborne B.I."/>
            <person name="Pai G."/>
            <person name="Peterson J."/>
            <person name="Pham P.K."/>
            <person name="Rizzo M."/>
            <person name="Rooney T."/>
            <person name="Rowley D."/>
            <person name="Sakano H."/>
            <person name="Salzberg S.L."/>
            <person name="Schwartz J.R."/>
            <person name="Shinn P."/>
            <person name="Southwick A.M."/>
            <person name="Sun H."/>
            <person name="Tallon L.J."/>
            <person name="Tambunga G."/>
            <person name="Toriumi M.J."/>
            <person name="Town C.D."/>
            <person name="Utterback T."/>
            <person name="Van Aken S."/>
            <person name="Vaysberg M."/>
            <person name="Vysotskaia V.S."/>
            <person name="Walker M."/>
            <person name="Wu D."/>
            <person name="Yu G."/>
            <person name="Fraser C.M."/>
            <person name="Venter J.C."/>
            <person name="Davis R.W."/>
        </authorList>
    </citation>
    <scope>NUCLEOTIDE SEQUENCE [LARGE SCALE GENOMIC DNA]</scope>
    <source>
        <strain>cv. Columbia</strain>
    </source>
</reference>
<reference key="2">
    <citation type="journal article" date="2017" name="Plant J.">
        <title>Araport11: a complete reannotation of the Arabidopsis thaliana reference genome.</title>
        <authorList>
            <person name="Cheng C.Y."/>
            <person name="Krishnakumar V."/>
            <person name="Chan A.P."/>
            <person name="Thibaud-Nissen F."/>
            <person name="Schobel S."/>
            <person name="Town C.D."/>
        </authorList>
    </citation>
    <scope>GENOME REANNOTATION</scope>
    <source>
        <strain>cv. Columbia</strain>
    </source>
</reference>
<reference key="3">
    <citation type="journal article" date="2005" name="Plant Physiol.">
        <title>Genome organization of more than 300 defensin-like genes in Arabidopsis.</title>
        <authorList>
            <person name="Silverstein K.A.T."/>
            <person name="Graham M.A."/>
            <person name="Paape T.D."/>
            <person name="VandenBosch K.A."/>
        </authorList>
    </citation>
    <scope>GENE FAMILY</scope>
</reference>
<keyword id="KW-0929">Antimicrobial</keyword>
<keyword id="KW-1015">Disulfide bond</keyword>
<keyword id="KW-0295">Fungicide</keyword>
<keyword id="KW-0611">Plant defense</keyword>
<keyword id="KW-1185">Reference proteome</keyword>
<keyword id="KW-0964">Secreted</keyword>
<keyword id="KW-0732">Signal</keyword>